<sequence length="96" mass="10268">MKIRPLHDRVLVKRNEAELKSAGGIVLTGSAAAKSTRGTITAVGNGRVLDNGQIKPLDVKVGDVVIFNEGYGAKTEKIDNEELLILNESDILAIVE</sequence>
<organism>
    <name type="scientific">Buchnera aphidicola subsp. Schizaphis graminum (strain Sg)</name>
    <dbReference type="NCBI Taxonomy" id="198804"/>
    <lineage>
        <taxon>Bacteria</taxon>
        <taxon>Pseudomonadati</taxon>
        <taxon>Pseudomonadota</taxon>
        <taxon>Gammaproteobacteria</taxon>
        <taxon>Enterobacterales</taxon>
        <taxon>Erwiniaceae</taxon>
        <taxon>Buchnera</taxon>
    </lineage>
</organism>
<protein>
    <recommendedName>
        <fullName evidence="1">Co-chaperonin GroES</fullName>
    </recommendedName>
    <alternativeName>
        <fullName evidence="1">10 kDa chaperonin</fullName>
    </alternativeName>
    <alternativeName>
        <fullName evidence="1">Chaperonin-10</fullName>
        <shortName evidence="1">Cpn10</shortName>
    </alternativeName>
</protein>
<name>CH10_BUCAP</name>
<dbReference type="EMBL" id="D85628">
    <property type="protein sequence ID" value="BAA12846.1"/>
    <property type="molecule type" value="Genomic_DNA"/>
</dbReference>
<dbReference type="EMBL" id="AF008210">
    <property type="protein sequence ID" value="AAC38100.1"/>
    <property type="molecule type" value="Genomic_DNA"/>
</dbReference>
<dbReference type="EMBL" id="AE013218">
    <property type="protein sequence ID" value="AAM67590.1"/>
    <property type="molecule type" value="Genomic_DNA"/>
</dbReference>
<dbReference type="RefSeq" id="WP_011053556.1">
    <property type="nucleotide sequence ID" value="NC_004061.1"/>
</dbReference>
<dbReference type="SMR" id="Q59176"/>
<dbReference type="STRING" id="198804.BUsg_018"/>
<dbReference type="GeneID" id="93003481"/>
<dbReference type="KEGG" id="bas:BUsg_018"/>
<dbReference type="eggNOG" id="COG0234">
    <property type="taxonomic scope" value="Bacteria"/>
</dbReference>
<dbReference type="HOGENOM" id="CLU_132825_1_1_6"/>
<dbReference type="Proteomes" id="UP000000416">
    <property type="component" value="Chromosome"/>
</dbReference>
<dbReference type="GO" id="GO:0005737">
    <property type="term" value="C:cytoplasm"/>
    <property type="evidence" value="ECO:0007669"/>
    <property type="project" value="UniProtKB-SubCell"/>
</dbReference>
<dbReference type="GO" id="GO:0005524">
    <property type="term" value="F:ATP binding"/>
    <property type="evidence" value="ECO:0007669"/>
    <property type="project" value="InterPro"/>
</dbReference>
<dbReference type="GO" id="GO:0046872">
    <property type="term" value="F:metal ion binding"/>
    <property type="evidence" value="ECO:0007669"/>
    <property type="project" value="TreeGrafter"/>
</dbReference>
<dbReference type="GO" id="GO:0044183">
    <property type="term" value="F:protein folding chaperone"/>
    <property type="evidence" value="ECO:0007669"/>
    <property type="project" value="InterPro"/>
</dbReference>
<dbReference type="GO" id="GO:0051087">
    <property type="term" value="F:protein-folding chaperone binding"/>
    <property type="evidence" value="ECO:0007669"/>
    <property type="project" value="TreeGrafter"/>
</dbReference>
<dbReference type="GO" id="GO:0051082">
    <property type="term" value="F:unfolded protein binding"/>
    <property type="evidence" value="ECO:0007669"/>
    <property type="project" value="TreeGrafter"/>
</dbReference>
<dbReference type="GO" id="GO:0051085">
    <property type="term" value="P:chaperone cofactor-dependent protein refolding"/>
    <property type="evidence" value="ECO:0007669"/>
    <property type="project" value="TreeGrafter"/>
</dbReference>
<dbReference type="CDD" id="cd00320">
    <property type="entry name" value="cpn10"/>
    <property type="match status" value="1"/>
</dbReference>
<dbReference type="FunFam" id="2.30.33.40:FF:000001">
    <property type="entry name" value="10 kDa chaperonin"/>
    <property type="match status" value="1"/>
</dbReference>
<dbReference type="Gene3D" id="2.30.33.40">
    <property type="entry name" value="GroES chaperonin"/>
    <property type="match status" value="1"/>
</dbReference>
<dbReference type="HAMAP" id="MF_00580">
    <property type="entry name" value="CH10"/>
    <property type="match status" value="1"/>
</dbReference>
<dbReference type="InterPro" id="IPR020818">
    <property type="entry name" value="Chaperonin_GroES"/>
</dbReference>
<dbReference type="InterPro" id="IPR037124">
    <property type="entry name" value="Chaperonin_GroES_sf"/>
</dbReference>
<dbReference type="InterPro" id="IPR018369">
    <property type="entry name" value="Chaprnonin_Cpn10_CS"/>
</dbReference>
<dbReference type="InterPro" id="IPR011032">
    <property type="entry name" value="GroES-like_sf"/>
</dbReference>
<dbReference type="NCBIfam" id="NF001526">
    <property type="entry name" value="PRK00364.1-1"/>
    <property type="match status" value="1"/>
</dbReference>
<dbReference type="NCBIfam" id="NF001531">
    <property type="entry name" value="PRK00364.2-2"/>
    <property type="match status" value="1"/>
</dbReference>
<dbReference type="PANTHER" id="PTHR10772">
    <property type="entry name" value="10 KDA HEAT SHOCK PROTEIN"/>
    <property type="match status" value="1"/>
</dbReference>
<dbReference type="PANTHER" id="PTHR10772:SF58">
    <property type="entry name" value="CO-CHAPERONIN GROES"/>
    <property type="match status" value="1"/>
</dbReference>
<dbReference type="Pfam" id="PF00166">
    <property type="entry name" value="Cpn10"/>
    <property type="match status" value="1"/>
</dbReference>
<dbReference type="PRINTS" id="PR00297">
    <property type="entry name" value="CHAPERONIN10"/>
</dbReference>
<dbReference type="SMART" id="SM00883">
    <property type="entry name" value="Cpn10"/>
    <property type="match status" value="1"/>
</dbReference>
<dbReference type="SUPFAM" id="SSF50129">
    <property type="entry name" value="GroES-like"/>
    <property type="match status" value="1"/>
</dbReference>
<dbReference type="PROSITE" id="PS00681">
    <property type="entry name" value="CHAPERONINS_CPN10"/>
    <property type="match status" value="1"/>
</dbReference>
<keyword id="KW-0143">Chaperone</keyword>
<keyword id="KW-0963">Cytoplasm</keyword>
<evidence type="ECO:0000255" key="1">
    <source>
        <dbReference type="HAMAP-Rule" id="MF_00580"/>
    </source>
</evidence>
<evidence type="ECO:0000305" key="2"/>
<comment type="function">
    <text evidence="1">Together with the chaperonin GroEL, plays an essential role in assisting protein folding. The GroEL-GroES system forms a nano-cage that allows encapsulation of the non-native substrate proteins and provides a physical environment optimized to promote and accelerate protein folding. GroES binds to the apical surface of the GroEL ring, thereby capping the opening of the GroEL channel.</text>
</comment>
<comment type="subunit">
    <text evidence="1">Heptamer of 7 subunits arranged in a ring. Interacts with the chaperonin GroEL.</text>
</comment>
<comment type="subcellular location">
    <subcellularLocation>
        <location evidence="1">Cytoplasm</location>
    </subcellularLocation>
</comment>
<comment type="similarity">
    <text evidence="1 2">Belongs to the GroES chaperonin family.</text>
</comment>
<accession>Q59176</accession>
<feature type="chain" id="PRO_0000174713" description="Co-chaperonin GroES">
    <location>
        <begin position="1"/>
        <end position="96"/>
    </location>
</feature>
<gene>
    <name evidence="1" type="primary">groES</name>
    <name evidence="1" type="synonym">groS</name>
    <name type="synonym">mopB</name>
    <name type="ordered locus">BUsg_018</name>
</gene>
<reference key="1">
    <citation type="submission" date="1996-06" db="EMBL/GenBank/DDBJ databases">
        <title>The nucleotide sequence of 60K, tdhF, groES and groEL genes of Buchnera aphidicola.</title>
        <authorList>
            <person name="Anwarul H.K."/>
            <person name="Moriya S."/>
            <person name="Baumann P."/>
            <person name="Yoshikawa H."/>
            <person name="Ogasawara N."/>
        </authorList>
    </citation>
    <scope>NUCLEOTIDE SEQUENCE [GENOMIC DNA]</scope>
</reference>
<reference key="2">
    <citation type="journal article" date="1998" name="Curr. Microbiol.">
        <title>Sequence analysis of a 34.7-kb DNA segment from the genome of Buchnera aphidicola (endosymbiont of aphids) containing groEL, dnaA, the atp operon, gidA, and rho.</title>
        <authorList>
            <person name="Clark M.A."/>
            <person name="Baumann L."/>
            <person name="Baumann P."/>
        </authorList>
    </citation>
    <scope>NUCLEOTIDE SEQUENCE [GENOMIC DNA]</scope>
</reference>
<reference key="3">
    <citation type="journal article" date="2002" name="Science">
        <title>50 million years of genomic stasis in endosymbiotic bacteria.</title>
        <authorList>
            <person name="Tamas I."/>
            <person name="Klasson L."/>
            <person name="Canbaeck B."/>
            <person name="Naeslund A.K."/>
            <person name="Eriksson A.-S."/>
            <person name="Wernegreen J.J."/>
            <person name="Sandstroem J.P."/>
            <person name="Moran N.A."/>
            <person name="Andersson S.G.E."/>
        </authorList>
    </citation>
    <scope>NUCLEOTIDE SEQUENCE [LARGE SCALE GENOMIC DNA]</scope>
    <source>
        <strain>Sg</strain>
    </source>
</reference>
<proteinExistence type="inferred from homology"/>